<feature type="chain" id="PRO_1000202635" description="Glutamyl-tRNA reductase">
    <location>
        <begin position="1"/>
        <end position="448"/>
    </location>
</feature>
<feature type="region of interest" description="Disordered" evidence="2">
    <location>
        <begin position="427"/>
        <end position="448"/>
    </location>
</feature>
<feature type="active site" description="Nucleophile" evidence="1">
    <location>
        <position position="50"/>
    </location>
</feature>
<feature type="binding site" evidence="1">
    <location>
        <begin position="49"/>
        <end position="52"/>
    </location>
    <ligand>
        <name>substrate</name>
    </ligand>
</feature>
<feature type="binding site" evidence="1">
    <location>
        <position position="109"/>
    </location>
    <ligand>
        <name>substrate</name>
    </ligand>
</feature>
<feature type="binding site" evidence="1">
    <location>
        <begin position="114"/>
        <end position="116"/>
    </location>
    <ligand>
        <name>substrate</name>
    </ligand>
</feature>
<feature type="binding site" evidence="1">
    <location>
        <position position="120"/>
    </location>
    <ligand>
        <name>substrate</name>
    </ligand>
</feature>
<feature type="binding site" evidence="1">
    <location>
        <begin position="189"/>
        <end position="194"/>
    </location>
    <ligand>
        <name>NADP(+)</name>
        <dbReference type="ChEBI" id="CHEBI:58349"/>
    </ligand>
</feature>
<feature type="site" description="Important for activity" evidence="1">
    <location>
        <position position="99"/>
    </location>
</feature>
<protein>
    <recommendedName>
        <fullName evidence="1">Glutamyl-tRNA reductase</fullName>
        <shortName evidence="1">GluTR</shortName>
        <ecNumber evidence="1">1.2.1.70</ecNumber>
    </recommendedName>
</protein>
<comment type="function">
    <text evidence="1">Catalyzes the NADPH-dependent reduction of glutamyl-tRNA(Glu) to glutamate 1-semialdehyde (GSA).</text>
</comment>
<comment type="catalytic activity">
    <reaction evidence="1">
        <text>(S)-4-amino-5-oxopentanoate + tRNA(Glu) + NADP(+) = L-glutamyl-tRNA(Glu) + NADPH + H(+)</text>
        <dbReference type="Rhea" id="RHEA:12344"/>
        <dbReference type="Rhea" id="RHEA-COMP:9663"/>
        <dbReference type="Rhea" id="RHEA-COMP:9680"/>
        <dbReference type="ChEBI" id="CHEBI:15378"/>
        <dbReference type="ChEBI" id="CHEBI:57501"/>
        <dbReference type="ChEBI" id="CHEBI:57783"/>
        <dbReference type="ChEBI" id="CHEBI:58349"/>
        <dbReference type="ChEBI" id="CHEBI:78442"/>
        <dbReference type="ChEBI" id="CHEBI:78520"/>
        <dbReference type="EC" id="1.2.1.70"/>
    </reaction>
</comment>
<comment type="pathway">
    <text evidence="1">Porphyrin-containing compound metabolism; protoporphyrin-IX biosynthesis; 5-aminolevulinate from L-glutamyl-tRNA(Glu): step 1/2.</text>
</comment>
<comment type="subunit">
    <text evidence="1">Homodimer.</text>
</comment>
<comment type="domain">
    <text evidence="1">Possesses an unusual extended V-shaped dimeric structure with each monomer consisting of three distinct domains arranged along a curved 'spinal' alpha-helix. The N-terminal catalytic domain specifically recognizes the glutamate moiety of the substrate. The second domain is the NADPH-binding domain, and the third C-terminal domain is responsible for dimerization.</text>
</comment>
<comment type="miscellaneous">
    <text evidence="1">During catalysis, the active site Cys acts as a nucleophile attacking the alpha-carbonyl group of tRNA-bound glutamate with the formation of a thioester intermediate between enzyme and glutamate, and the concomitant release of tRNA(Glu). The thioester intermediate is finally reduced by direct hydride transfer from NADPH, to form the product GSA.</text>
</comment>
<comment type="similarity">
    <text evidence="1">Belongs to the glutamyl-tRNA reductase family.</text>
</comment>
<sequence length="448" mass="49912">MHIVVVGLNNKTAPVAIREQFSFGEQEIVDAMIALREEKSIFESVILSTCNRTELYVVTDQLHTGRYYTKRFLANWFNLEMEQFTPYLSIREGEEAIRHLFRVTSGLDSMIIGETQILGQVKTSFFRAQEHGTTGTVFNKLFKEAVTLAKRAHTDTQIGEMSVSVSSAAVTLAQEMYQQLEDKQVVVVGAGETGELTTLNLFEAGAKQIAVFNRTESKAKAVADKFKGRAHSIREIACGLLDADILISSTGAKEAVIGYDDVAAAQLLRRERPLLLIDIAVPRDIDPAVATLPGVHLFDVDDLNGIVNKNLEARLVEAEKIEMKIDEAIQEFQTWLVTLGVVPIMNELRARALDIQEDTMTSLERKLDHLSARDKKVIGKHMKSIINQMLRDPIDYIKDAAAQPDANVRIAQFIETFGLDVELPEQPVDEVEETDATSAKAPLRALMR</sequence>
<proteinExistence type="inferred from homology"/>
<dbReference type="EC" id="1.2.1.70" evidence="1"/>
<dbReference type="EMBL" id="CP001615">
    <property type="protein sequence ID" value="ACQ71558.1"/>
    <property type="molecule type" value="Genomic_DNA"/>
</dbReference>
<dbReference type="RefSeq" id="WP_015881117.1">
    <property type="nucleotide sequence ID" value="NC_012673.1"/>
</dbReference>
<dbReference type="SMR" id="C4L4J5"/>
<dbReference type="STRING" id="360911.EAT1b_2642"/>
<dbReference type="KEGG" id="eat:EAT1b_2642"/>
<dbReference type="eggNOG" id="COG0373">
    <property type="taxonomic scope" value="Bacteria"/>
</dbReference>
<dbReference type="HOGENOM" id="CLU_035113_2_2_9"/>
<dbReference type="OrthoDB" id="110209at2"/>
<dbReference type="UniPathway" id="UPA00251">
    <property type="reaction ID" value="UER00316"/>
</dbReference>
<dbReference type="Proteomes" id="UP000000716">
    <property type="component" value="Chromosome"/>
</dbReference>
<dbReference type="GO" id="GO:0008883">
    <property type="term" value="F:glutamyl-tRNA reductase activity"/>
    <property type="evidence" value="ECO:0007669"/>
    <property type="project" value="UniProtKB-UniRule"/>
</dbReference>
<dbReference type="GO" id="GO:0050661">
    <property type="term" value="F:NADP binding"/>
    <property type="evidence" value="ECO:0007669"/>
    <property type="project" value="InterPro"/>
</dbReference>
<dbReference type="GO" id="GO:0019353">
    <property type="term" value="P:protoporphyrinogen IX biosynthetic process from glutamate"/>
    <property type="evidence" value="ECO:0007669"/>
    <property type="project" value="TreeGrafter"/>
</dbReference>
<dbReference type="CDD" id="cd05213">
    <property type="entry name" value="NAD_bind_Glutamyl_tRNA_reduct"/>
    <property type="match status" value="1"/>
</dbReference>
<dbReference type="FunFam" id="3.30.460.30:FF:000001">
    <property type="entry name" value="Glutamyl-tRNA reductase"/>
    <property type="match status" value="1"/>
</dbReference>
<dbReference type="FunFam" id="3.40.50.720:FF:000031">
    <property type="entry name" value="Glutamyl-tRNA reductase"/>
    <property type="match status" value="1"/>
</dbReference>
<dbReference type="Gene3D" id="3.30.460.30">
    <property type="entry name" value="Glutamyl-tRNA reductase, N-terminal domain"/>
    <property type="match status" value="1"/>
</dbReference>
<dbReference type="Gene3D" id="3.40.50.720">
    <property type="entry name" value="NAD(P)-binding Rossmann-like Domain"/>
    <property type="match status" value="1"/>
</dbReference>
<dbReference type="HAMAP" id="MF_00087">
    <property type="entry name" value="Glu_tRNA_reductase"/>
    <property type="match status" value="1"/>
</dbReference>
<dbReference type="InterPro" id="IPR000343">
    <property type="entry name" value="4pyrrol_synth_GluRdtase"/>
</dbReference>
<dbReference type="InterPro" id="IPR015896">
    <property type="entry name" value="4pyrrol_synth_GluRdtase_dimer"/>
</dbReference>
<dbReference type="InterPro" id="IPR015895">
    <property type="entry name" value="4pyrrol_synth_GluRdtase_N"/>
</dbReference>
<dbReference type="InterPro" id="IPR018214">
    <property type="entry name" value="GluRdtase_CS"/>
</dbReference>
<dbReference type="InterPro" id="IPR036453">
    <property type="entry name" value="GluRdtase_dimer_dom_sf"/>
</dbReference>
<dbReference type="InterPro" id="IPR036343">
    <property type="entry name" value="GluRdtase_N_sf"/>
</dbReference>
<dbReference type="InterPro" id="IPR036291">
    <property type="entry name" value="NAD(P)-bd_dom_sf"/>
</dbReference>
<dbReference type="InterPro" id="IPR006151">
    <property type="entry name" value="Shikm_DH/Glu-tRNA_Rdtase"/>
</dbReference>
<dbReference type="NCBIfam" id="TIGR01035">
    <property type="entry name" value="hemA"/>
    <property type="match status" value="1"/>
</dbReference>
<dbReference type="PANTHER" id="PTHR43013">
    <property type="entry name" value="GLUTAMYL-TRNA REDUCTASE"/>
    <property type="match status" value="1"/>
</dbReference>
<dbReference type="PANTHER" id="PTHR43013:SF1">
    <property type="entry name" value="GLUTAMYL-TRNA REDUCTASE"/>
    <property type="match status" value="1"/>
</dbReference>
<dbReference type="Pfam" id="PF00745">
    <property type="entry name" value="GlutR_dimer"/>
    <property type="match status" value="1"/>
</dbReference>
<dbReference type="Pfam" id="PF05201">
    <property type="entry name" value="GlutR_N"/>
    <property type="match status" value="1"/>
</dbReference>
<dbReference type="Pfam" id="PF01488">
    <property type="entry name" value="Shikimate_DH"/>
    <property type="match status" value="1"/>
</dbReference>
<dbReference type="PIRSF" id="PIRSF000445">
    <property type="entry name" value="4pyrrol_synth_GluRdtase"/>
    <property type="match status" value="1"/>
</dbReference>
<dbReference type="SUPFAM" id="SSF69742">
    <property type="entry name" value="Glutamyl tRNA-reductase catalytic, N-terminal domain"/>
    <property type="match status" value="1"/>
</dbReference>
<dbReference type="SUPFAM" id="SSF69075">
    <property type="entry name" value="Glutamyl tRNA-reductase dimerization domain"/>
    <property type="match status" value="1"/>
</dbReference>
<dbReference type="SUPFAM" id="SSF51735">
    <property type="entry name" value="NAD(P)-binding Rossmann-fold domains"/>
    <property type="match status" value="1"/>
</dbReference>
<dbReference type="PROSITE" id="PS00747">
    <property type="entry name" value="GLUTR"/>
    <property type="match status" value="1"/>
</dbReference>
<gene>
    <name evidence="1" type="primary">hemA</name>
    <name type="ordered locus">EAT1b_2642</name>
</gene>
<accession>C4L4J5</accession>
<name>HEM1_EXISA</name>
<organism>
    <name type="scientific">Exiguobacterium sp. (strain ATCC BAA-1283 / AT1b)</name>
    <dbReference type="NCBI Taxonomy" id="360911"/>
    <lineage>
        <taxon>Bacteria</taxon>
        <taxon>Bacillati</taxon>
        <taxon>Bacillota</taxon>
        <taxon>Bacilli</taxon>
        <taxon>Bacillales</taxon>
        <taxon>Bacillales Family XII. Incertae Sedis</taxon>
        <taxon>Exiguobacterium</taxon>
    </lineage>
</organism>
<reference key="1">
    <citation type="journal article" date="2011" name="J. Bacteriol.">
        <title>Complete genome sequence of the Thermophilic Bacterium Exiguobacterium sp. AT1b.</title>
        <authorList>
            <person name="Vishnivetskaya T.A."/>
            <person name="Lucas S."/>
            <person name="Copeland A."/>
            <person name="Lapidus A."/>
            <person name="Glavina del Rio T."/>
            <person name="Dalin E."/>
            <person name="Tice H."/>
            <person name="Bruce D.C."/>
            <person name="Goodwin L.A."/>
            <person name="Pitluck S."/>
            <person name="Saunders E."/>
            <person name="Brettin T."/>
            <person name="Detter C."/>
            <person name="Han C."/>
            <person name="Larimer F."/>
            <person name="Land M.L."/>
            <person name="Hauser L.J."/>
            <person name="Kyrpides N.C."/>
            <person name="Ovchinnikova G."/>
            <person name="Kathariou S."/>
            <person name="Ramaley R.F."/>
            <person name="Rodrigues D.F."/>
            <person name="Hendrix C."/>
            <person name="Richardson P."/>
            <person name="Tiedje J.M."/>
        </authorList>
    </citation>
    <scope>NUCLEOTIDE SEQUENCE [LARGE SCALE GENOMIC DNA]</scope>
    <source>
        <strain>ATCC BAA-1283 / AT1b</strain>
    </source>
</reference>
<evidence type="ECO:0000255" key="1">
    <source>
        <dbReference type="HAMAP-Rule" id="MF_00087"/>
    </source>
</evidence>
<evidence type="ECO:0000256" key="2">
    <source>
        <dbReference type="SAM" id="MobiDB-lite"/>
    </source>
</evidence>
<keyword id="KW-0521">NADP</keyword>
<keyword id="KW-0560">Oxidoreductase</keyword>
<keyword id="KW-0627">Porphyrin biosynthesis</keyword>